<dbReference type="EMBL" id="U43188">
    <property type="protein sequence ID" value="AAB37759.1"/>
    <property type="molecule type" value="mRNA"/>
</dbReference>
<dbReference type="EMBL" id="U43189">
    <property type="protein sequence ID" value="AAB37760.1"/>
    <property type="molecule type" value="mRNA"/>
</dbReference>
<dbReference type="EMBL" id="U43189">
    <property type="protein sequence ID" value="AAB37761.1"/>
    <property type="molecule type" value="mRNA"/>
</dbReference>
<dbReference type="EMBL" id="AF256222">
    <property type="protein sequence ID" value="AAF67195.1"/>
    <property type="molecule type" value="mRNA"/>
</dbReference>
<dbReference type="EMBL" id="AF256223">
    <property type="protein sequence ID" value="AAF67196.1"/>
    <property type="molecule type" value="mRNA"/>
</dbReference>
<dbReference type="EMBL" id="AC024032">
    <property type="status" value="NOT_ANNOTATED_CDS"/>
    <property type="molecule type" value="Genomic_DNA"/>
</dbReference>
<dbReference type="EMBL" id="AC093602">
    <property type="status" value="NOT_ANNOTATED_CDS"/>
    <property type="molecule type" value="Genomic_DNA"/>
</dbReference>
<dbReference type="EMBL" id="BC034951">
    <property type="protein sequence ID" value="AAH34951.1"/>
    <property type="molecule type" value="mRNA"/>
</dbReference>
<dbReference type="EMBL" id="BC065025">
    <property type="protein sequence ID" value="AAH65025.1"/>
    <property type="status" value="ALT_FRAME"/>
    <property type="molecule type" value="mRNA"/>
</dbReference>
<dbReference type="CCDS" id="CCDS3744.1">
    <molecule id="Q15723-1"/>
</dbReference>
<dbReference type="CCDS" id="CCDS3745.1">
    <molecule id="Q15723-3"/>
</dbReference>
<dbReference type="CCDS" id="CCDS64062.1">
    <molecule id="Q15723-2"/>
</dbReference>
<dbReference type="CCDS" id="CCDS64063.1">
    <molecule id="Q15723-4"/>
</dbReference>
<dbReference type="CCDS" id="CCDS82954.1">
    <molecule id="Q15723-5"/>
</dbReference>
<dbReference type="PIR" id="G02318">
    <property type="entry name" value="G02318"/>
</dbReference>
<dbReference type="RefSeq" id="NP_001263386.1">
    <molecule id="Q15723-4"/>
    <property type="nucleotide sequence ID" value="NM_001276457.2"/>
</dbReference>
<dbReference type="RefSeq" id="NP_001263387.1">
    <molecule id="Q15723-2"/>
    <property type="nucleotide sequence ID" value="NM_001276458.3"/>
</dbReference>
<dbReference type="RefSeq" id="NP_001263388.1">
    <property type="nucleotide sequence ID" value="NM_001276459.1"/>
</dbReference>
<dbReference type="RefSeq" id="NP_001317965.1">
    <molecule id="Q15723-5"/>
    <property type="nucleotide sequence ID" value="NM_001331036.3"/>
</dbReference>
<dbReference type="RefSeq" id="NP_001358253.1">
    <molecule id="Q15723-1"/>
    <property type="nucleotide sequence ID" value="NM_001371324.1"/>
</dbReference>
<dbReference type="RefSeq" id="NP_006865.1">
    <molecule id="Q15723-3"/>
    <property type="nucleotide sequence ID" value="NM_006874.5"/>
</dbReference>
<dbReference type="RefSeq" id="NP_973728.1">
    <molecule id="Q15723-1"/>
    <property type="nucleotide sequence ID" value="NM_201999.3"/>
</dbReference>
<dbReference type="RefSeq" id="XP_005262861.1">
    <property type="nucleotide sequence ID" value="XM_005262804.2"/>
</dbReference>
<dbReference type="RefSeq" id="XP_047305688.1">
    <molecule id="Q15723-5"/>
    <property type="nucleotide sequence ID" value="XM_047449732.1"/>
</dbReference>
<dbReference type="RefSeq" id="XP_047305689.1">
    <molecule id="Q15723-5"/>
    <property type="nucleotide sequence ID" value="XM_047449733.1"/>
</dbReference>
<dbReference type="RefSeq" id="XP_047305690.1">
    <molecule id="Q15723-5"/>
    <property type="nucleotide sequence ID" value="XM_047449734.1"/>
</dbReference>
<dbReference type="RefSeq" id="XP_047305692.1">
    <molecule id="Q15723-5"/>
    <property type="nucleotide sequence ID" value="XM_047449736.1"/>
</dbReference>
<dbReference type="RefSeq" id="XP_047305693.1">
    <molecule id="Q15723-5"/>
    <property type="nucleotide sequence ID" value="XM_047449737.1"/>
</dbReference>
<dbReference type="RefSeq" id="XP_047305694.1">
    <molecule id="Q15723-1"/>
    <property type="nucleotide sequence ID" value="XM_047449738.1"/>
</dbReference>
<dbReference type="RefSeq" id="XP_047305695.1">
    <molecule id="Q15723-1"/>
    <property type="nucleotide sequence ID" value="XM_047449739.1"/>
</dbReference>
<dbReference type="RefSeq" id="XP_047305696.1">
    <molecule id="Q15723-1"/>
    <property type="nucleotide sequence ID" value="XM_047449740.1"/>
</dbReference>
<dbReference type="RefSeq" id="XP_054205125.1">
    <molecule id="Q15723-5"/>
    <property type="nucleotide sequence ID" value="XM_054349150.1"/>
</dbReference>
<dbReference type="RefSeq" id="XP_054205126.1">
    <molecule id="Q15723-5"/>
    <property type="nucleotide sequence ID" value="XM_054349151.1"/>
</dbReference>
<dbReference type="RefSeq" id="XP_054205127.1">
    <molecule id="Q15723-5"/>
    <property type="nucleotide sequence ID" value="XM_054349152.1"/>
</dbReference>
<dbReference type="RefSeq" id="XP_054205128.1">
    <molecule id="Q15723-5"/>
    <property type="nucleotide sequence ID" value="XM_054349153.1"/>
</dbReference>
<dbReference type="RefSeq" id="XP_054205129.1">
    <molecule id="Q15723-1"/>
    <property type="nucleotide sequence ID" value="XM_054349154.1"/>
</dbReference>
<dbReference type="RefSeq" id="XP_054205130.1">
    <molecule id="Q15723-1"/>
    <property type="nucleotide sequence ID" value="XM_054349155.1"/>
</dbReference>
<dbReference type="RefSeq" id="XP_054205131.1">
    <molecule id="Q15723-1"/>
    <property type="nucleotide sequence ID" value="XM_054349156.1"/>
</dbReference>
<dbReference type="SMR" id="Q15723"/>
<dbReference type="BioGRID" id="108313">
    <property type="interactions" value="148"/>
</dbReference>
<dbReference type="FunCoup" id="Q15723">
    <property type="interactions" value="3859"/>
</dbReference>
<dbReference type="IntAct" id="Q15723">
    <property type="interactions" value="127"/>
</dbReference>
<dbReference type="MINT" id="Q15723"/>
<dbReference type="STRING" id="9606.ENSP00000368868"/>
<dbReference type="GlyCosmos" id="Q15723">
    <property type="glycosylation" value="23 sites, 2 glycans"/>
</dbReference>
<dbReference type="GlyGen" id="Q15723">
    <property type="glycosylation" value="29 sites, 1 N-linked glycan (1 site), 2 O-linked glycans (28 sites)"/>
</dbReference>
<dbReference type="iPTMnet" id="Q15723"/>
<dbReference type="PhosphoSitePlus" id="Q15723"/>
<dbReference type="BioMuta" id="ELF2"/>
<dbReference type="DMDM" id="68052029"/>
<dbReference type="jPOST" id="Q15723"/>
<dbReference type="MassIVE" id="Q15723"/>
<dbReference type="PaxDb" id="9606-ENSP00000377782"/>
<dbReference type="PeptideAtlas" id="Q15723"/>
<dbReference type="ProteomicsDB" id="19535"/>
<dbReference type="ProteomicsDB" id="60718">
    <molecule id="Q15723-5"/>
</dbReference>
<dbReference type="ProteomicsDB" id="60719">
    <molecule id="Q15723-1"/>
</dbReference>
<dbReference type="ProteomicsDB" id="60720">
    <molecule id="Q15723-2"/>
</dbReference>
<dbReference type="ProteomicsDB" id="60721">
    <molecule id="Q15723-3"/>
</dbReference>
<dbReference type="ProteomicsDB" id="60722">
    <molecule id="Q15723-4"/>
</dbReference>
<dbReference type="Pumba" id="Q15723"/>
<dbReference type="Antibodypedia" id="896">
    <property type="antibodies" value="154 antibodies from 26 providers"/>
</dbReference>
<dbReference type="DNASU" id="1998"/>
<dbReference type="Ensembl" id="ENST00000358635.7">
    <molecule id="Q15723-3"/>
    <property type="protein sequence ID" value="ENSP00000351458.2"/>
    <property type="gene ID" value="ENSG00000109381.21"/>
</dbReference>
<dbReference type="Ensembl" id="ENST00000379549.7">
    <molecule id="Q15723-4"/>
    <property type="protein sequence ID" value="ENSP00000368867.2"/>
    <property type="gene ID" value="ENSG00000109381.21"/>
</dbReference>
<dbReference type="Ensembl" id="ENST00000379550.5">
    <molecule id="Q15723-5"/>
    <property type="protein sequence ID" value="ENSP00000368868.1"/>
    <property type="gene ID" value="ENSG00000109381.21"/>
</dbReference>
<dbReference type="Ensembl" id="ENST00000394235.6">
    <molecule id="Q15723-1"/>
    <property type="protein sequence ID" value="ENSP00000377782.1"/>
    <property type="gene ID" value="ENSG00000109381.21"/>
</dbReference>
<dbReference type="Ensembl" id="ENST00000510408.5">
    <molecule id="Q15723-2"/>
    <property type="protein sequence ID" value="ENSP00000426997.1"/>
    <property type="gene ID" value="ENSG00000109381.21"/>
</dbReference>
<dbReference type="Ensembl" id="ENST00000686138.1">
    <molecule id="Q15723-5"/>
    <property type="protein sequence ID" value="ENSP00000510098.1"/>
    <property type="gene ID" value="ENSG00000109381.21"/>
</dbReference>
<dbReference type="GeneID" id="1998"/>
<dbReference type="KEGG" id="hsa:1998"/>
<dbReference type="MANE-Select" id="ENST00000686138.1">
    <property type="protein sequence ID" value="ENSP00000510098.1"/>
    <property type="RefSeq nucleotide sequence ID" value="NM_001331036.3"/>
    <property type="RefSeq protein sequence ID" value="NP_001317965.1"/>
</dbReference>
<dbReference type="UCSC" id="uc003ihm.3">
    <molecule id="Q15723-5"/>
    <property type="organism name" value="human"/>
</dbReference>
<dbReference type="AGR" id="HGNC:3317"/>
<dbReference type="CTD" id="1998"/>
<dbReference type="DisGeNET" id="1998"/>
<dbReference type="GeneCards" id="ELF2"/>
<dbReference type="HGNC" id="HGNC:3317">
    <property type="gene designation" value="ELF2"/>
</dbReference>
<dbReference type="HPA" id="ENSG00000109381">
    <property type="expression patterns" value="Low tissue specificity"/>
</dbReference>
<dbReference type="MIM" id="619798">
    <property type="type" value="gene"/>
</dbReference>
<dbReference type="neXtProt" id="NX_Q15723"/>
<dbReference type="OpenTargets" id="ENSG00000109381"/>
<dbReference type="PharmGKB" id="PA27745"/>
<dbReference type="VEuPathDB" id="HostDB:ENSG00000109381"/>
<dbReference type="eggNOG" id="KOG3804">
    <property type="taxonomic scope" value="Eukaryota"/>
</dbReference>
<dbReference type="GeneTree" id="ENSGT00940000154953"/>
<dbReference type="HOGENOM" id="CLU_027279_2_0_1"/>
<dbReference type="InParanoid" id="Q15723"/>
<dbReference type="OMA" id="SSHVHCT"/>
<dbReference type="OrthoDB" id="8196042at2759"/>
<dbReference type="PAN-GO" id="Q15723">
    <property type="GO annotations" value="4 GO annotations based on evolutionary models"/>
</dbReference>
<dbReference type="PhylomeDB" id="Q15723"/>
<dbReference type="TreeFam" id="TF318679"/>
<dbReference type="PathwayCommons" id="Q15723"/>
<dbReference type="Reactome" id="R-HSA-8939245">
    <property type="pathway name" value="RUNX1 regulates transcription of genes involved in BCR signaling"/>
</dbReference>
<dbReference type="SignaLink" id="Q15723"/>
<dbReference type="SIGNOR" id="Q15723"/>
<dbReference type="BioGRID-ORCS" id="1998">
    <property type="hits" value="61 hits in 1193 CRISPR screens"/>
</dbReference>
<dbReference type="CD-CODE" id="DEE660B4">
    <property type="entry name" value="Stress granule"/>
</dbReference>
<dbReference type="ChiTaRS" id="ELF2">
    <property type="organism name" value="human"/>
</dbReference>
<dbReference type="GeneWiki" id="ELF2"/>
<dbReference type="GenomeRNAi" id="1998"/>
<dbReference type="Pharos" id="Q15723">
    <property type="development level" value="Tbio"/>
</dbReference>
<dbReference type="PRO" id="PR:Q15723"/>
<dbReference type="Proteomes" id="UP000005640">
    <property type="component" value="Chromosome 4"/>
</dbReference>
<dbReference type="RNAct" id="Q15723">
    <property type="molecule type" value="protein"/>
</dbReference>
<dbReference type="Bgee" id="ENSG00000109381">
    <property type="expression patterns" value="Expressed in calcaneal tendon and 195 other cell types or tissues"/>
</dbReference>
<dbReference type="ExpressionAtlas" id="Q15723">
    <property type="expression patterns" value="baseline and differential"/>
</dbReference>
<dbReference type="GO" id="GO:0000785">
    <property type="term" value="C:chromatin"/>
    <property type="evidence" value="ECO:0000247"/>
    <property type="project" value="NTNU_SB"/>
</dbReference>
<dbReference type="GO" id="GO:0005829">
    <property type="term" value="C:cytosol"/>
    <property type="evidence" value="ECO:0000314"/>
    <property type="project" value="HPA"/>
</dbReference>
<dbReference type="GO" id="GO:0016604">
    <property type="term" value="C:nuclear body"/>
    <property type="evidence" value="ECO:0000314"/>
    <property type="project" value="HPA"/>
</dbReference>
<dbReference type="GO" id="GO:0005654">
    <property type="term" value="C:nucleoplasm"/>
    <property type="evidence" value="ECO:0000314"/>
    <property type="project" value="HPA"/>
</dbReference>
<dbReference type="GO" id="GO:0005634">
    <property type="term" value="C:nucleus"/>
    <property type="evidence" value="ECO:0000318"/>
    <property type="project" value="GO_Central"/>
</dbReference>
<dbReference type="GO" id="GO:0003700">
    <property type="term" value="F:DNA-binding transcription factor activity"/>
    <property type="evidence" value="ECO:0000314"/>
    <property type="project" value="UniProtKB"/>
</dbReference>
<dbReference type="GO" id="GO:0000981">
    <property type="term" value="F:DNA-binding transcription factor activity, RNA polymerase II-specific"/>
    <property type="evidence" value="ECO:0000314"/>
    <property type="project" value="NTNU_SB"/>
</dbReference>
<dbReference type="GO" id="GO:0043565">
    <property type="term" value="F:sequence-specific DNA binding"/>
    <property type="evidence" value="ECO:0000314"/>
    <property type="project" value="UniProtKB"/>
</dbReference>
<dbReference type="GO" id="GO:1990837">
    <property type="term" value="F:sequence-specific double-stranded DNA binding"/>
    <property type="evidence" value="ECO:0000314"/>
    <property type="project" value="ARUK-UCL"/>
</dbReference>
<dbReference type="GO" id="GO:0030154">
    <property type="term" value="P:cell differentiation"/>
    <property type="evidence" value="ECO:0000318"/>
    <property type="project" value="GO_Central"/>
</dbReference>
<dbReference type="GO" id="GO:0045892">
    <property type="term" value="P:negative regulation of DNA-templated transcription"/>
    <property type="evidence" value="ECO:0000314"/>
    <property type="project" value="UniProtKB"/>
</dbReference>
<dbReference type="GO" id="GO:0045893">
    <property type="term" value="P:positive regulation of DNA-templated transcription"/>
    <property type="evidence" value="ECO:0000314"/>
    <property type="project" value="UniProtKB"/>
</dbReference>
<dbReference type="GO" id="GO:0006357">
    <property type="term" value="P:regulation of transcription by RNA polymerase II"/>
    <property type="evidence" value="ECO:0000314"/>
    <property type="project" value="UniProtKB"/>
</dbReference>
<dbReference type="FunFam" id="1.10.10.10:FF:000066">
    <property type="entry name" value="ETS-related transcription factor Elf-2 isoform X1"/>
    <property type="match status" value="1"/>
</dbReference>
<dbReference type="Gene3D" id="1.10.10.10">
    <property type="entry name" value="Winged helix-like DNA-binding domain superfamily/Winged helix DNA-binding domain"/>
    <property type="match status" value="1"/>
</dbReference>
<dbReference type="InterPro" id="IPR000418">
    <property type="entry name" value="Ets_dom"/>
</dbReference>
<dbReference type="InterPro" id="IPR046328">
    <property type="entry name" value="ETS_fam"/>
</dbReference>
<dbReference type="InterPro" id="IPR022084">
    <property type="entry name" value="TF_Elf_N"/>
</dbReference>
<dbReference type="InterPro" id="IPR036388">
    <property type="entry name" value="WH-like_DNA-bd_sf"/>
</dbReference>
<dbReference type="InterPro" id="IPR036390">
    <property type="entry name" value="WH_DNA-bd_sf"/>
</dbReference>
<dbReference type="PANTHER" id="PTHR11849">
    <property type="entry name" value="ETS"/>
    <property type="match status" value="1"/>
</dbReference>
<dbReference type="PANTHER" id="PTHR11849:SF10">
    <property type="entry name" value="ETS-RELATED TRANSCRIPTION FACTOR ELF-2"/>
    <property type="match status" value="1"/>
</dbReference>
<dbReference type="Pfam" id="PF12310">
    <property type="entry name" value="Elf-1_N"/>
    <property type="match status" value="1"/>
</dbReference>
<dbReference type="Pfam" id="PF00178">
    <property type="entry name" value="Ets"/>
    <property type="match status" value="1"/>
</dbReference>
<dbReference type="PRINTS" id="PR00454">
    <property type="entry name" value="ETSDOMAIN"/>
</dbReference>
<dbReference type="SMART" id="SM00413">
    <property type="entry name" value="ETS"/>
    <property type="match status" value="1"/>
</dbReference>
<dbReference type="SUPFAM" id="SSF46785">
    <property type="entry name" value="Winged helix' DNA-binding domain"/>
    <property type="match status" value="1"/>
</dbReference>
<dbReference type="PROSITE" id="PS00345">
    <property type="entry name" value="ETS_DOMAIN_1"/>
    <property type="match status" value="1"/>
</dbReference>
<dbReference type="PROSITE" id="PS00346">
    <property type="entry name" value="ETS_DOMAIN_2"/>
    <property type="match status" value="1"/>
</dbReference>
<dbReference type="PROSITE" id="PS50061">
    <property type="entry name" value="ETS_DOMAIN_3"/>
    <property type="match status" value="1"/>
</dbReference>
<evidence type="ECO:0000250" key="1">
    <source>
        <dbReference type="UniProtKB" id="Q9JHC9"/>
    </source>
</evidence>
<evidence type="ECO:0000255" key="2"/>
<evidence type="ECO:0000255" key="3">
    <source>
        <dbReference type="PROSITE-ProRule" id="PRU00237"/>
    </source>
</evidence>
<evidence type="ECO:0000256" key="4">
    <source>
        <dbReference type="SAM" id="MobiDB-lite"/>
    </source>
</evidence>
<evidence type="ECO:0000269" key="5">
    <source>
    </source>
</evidence>
<evidence type="ECO:0000269" key="6">
    <source>
    </source>
</evidence>
<evidence type="ECO:0000269" key="7">
    <source>
    </source>
</evidence>
<evidence type="ECO:0000303" key="8">
    <source>
    </source>
</evidence>
<evidence type="ECO:0000303" key="9">
    <source>
    </source>
</evidence>
<evidence type="ECO:0000303" key="10">
    <source ref="2"/>
</evidence>
<evidence type="ECO:0000305" key="11"/>
<evidence type="ECO:0000312" key="12">
    <source>
        <dbReference type="EMBL" id="AAB37759.1"/>
    </source>
</evidence>
<evidence type="ECO:0000312" key="13">
    <source>
        <dbReference type="EMBL" id="AAF67195.1"/>
    </source>
</evidence>
<evidence type="ECO:0000312" key="14">
    <source>
        <dbReference type="EMBL" id="AAH34951.1"/>
    </source>
</evidence>
<evidence type="ECO:0007744" key="15">
    <source>
    </source>
</evidence>
<evidence type="ECO:0007744" key="16">
    <source>
    </source>
</evidence>
<evidence type="ECO:0007744" key="17">
    <source>
    </source>
</evidence>
<evidence type="ECO:0007744" key="18">
    <source>
    </source>
</evidence>
<evidence type="ECO:0007744" key="19">
    <source>
    </source>
</evidence>
<evidence type="ECO:0007744" key="20">
    <source>
    </source>
</evidence>
<feature type="chain" id="PRO_0000204087" description="ETS-related transcription factor Elf-2">
    <location>
        <begin position="1"/>
        <end position="593"/>
    </location>
</feature>
<feature type="DNA-binding region" description="ETS" evidence="3">
    <location>
        <begin position="208"/>
        <end position="290"/>
    </location>
</feature>
<feature type="region of interest" description="Disordered" evidence="4">
    <location>
        <begin position="146"/>
        <end position="201"/>
    </location>
</feature>
<feature type="compositionally biased region" description="Basic residues" evidence="4">
    <location>
        <begin position="171"/>
        <end position="181"/>
    </location>
</feature>
<feature type="compositionally biased region" description="Polar residues" evidence="4">
    <location>
        <begin position="182"/>
        <end position="191"/>
    </location>
</feature>
<feature type="modified residue" description="Phosphoserine" evidence="18">
    <location>
        <position position="107"/>
    </location>
</feature>
<feature type="modified residue" description="Phosphothreonine" evidence="1">
    <location>
        <position position="182"/>
    </location>
</feature>
<feature type="modified residue" description="Phosphoserine" evidence="17 18">
    <location>
        <position position="185"/>
    </location>
</feature>
<feature type="modified residue" description="Phosphoserine" evidence="16 18">
    <location>
        <position position="191"/>
    </location>
</feature>
<feature type="modified residue" description="Phosphoserine" evidence="18">
    <location>
        <position position="363"/>
    </location>
</feature>
<feature type="modified residue" description="Phosphoserine" evidence="15">
    <location>
        <position position="372"/>
    </location>
</feature>
<feature type="modified residue" description="Phosphothreonine" evidence="1">
    <location>
        <position position="376"/>
    </location>
</feature>
<feature type="modified residue" description="Phosphoserine" evidence="17">
    <location>
        <position position="430"/>
    </location>
</feature>
<feature type="modified residue" description="Omega-N-methylarginine" evidence="19">
    <location>
        <position position="494"/>
    </location>
</feature>
<feature type="modified residue" description="Phosphothreonine" evidence="18">
    <location>
        <position position="521"/>
    </location>
</feature>
<feature type="cross-link" description="Glycyl lysine isopeptide (Lys-Gly) (interchain with G-Cter in SUMO2)" evidence="20">
    <location>
        <position position="536"/>
    </location>
</feature>
<feature type="splice variant" id="VSP_014154" description="In isoform 2, isoform 3 and isoform 4." evidence="8 9 10">
    <original>MTSAVVDSGGTILELSSNGVENQEESEKVSEYPAVIVEPVPSARLEQGYAAQVLVYDDETYMMQDVAEEQEVETENVET</original>
    <variation>MATSLHEGPTNQLDLLIRA</variation>
    <location>
        <begin position="1"/>
        <end position="79"/>
    </location>
</feature>
<feature type="splice variant" id="VSP_014155" description="In isoform 1 and isoform 2." evidence="9 10">
    <original>PVEVFVPPCVSTP</original>
    <variation>P</variation>
    <location>
        <begin position="117"/>
        <end position="129"/>
    </location>
</feature>
<feature type="splice variant" id="VSP_014156" description="In isoform 4." evidence="8">
    <location>
        <begin position="175"/>
        <end position="203"/>
    </location>
</feature>
<accession>Q15723</accession>
<accession>E9PCX3</accession>
<accession>Q15724</accession>
<accession>Q15725</accession>
<accession>Q6P1K5</accession>
<gene>
    <name evidence="13" type="primary">ELF2</name>
    <name evidence="9" type="synonym">NERF</name>
</gene>
<name>ELF2_HUMAN</name>
<organism>
    <name type="scientific">Homo sapiens</name>
    <name type="common">Human</name>
    <dbReference type="NCBI Taxonomy" id="9606"/>
    <lineage>
        <taxon>Eukaryota</taxon>
        <taxon>Metazoa</taxon>
        <taxon>Chordata</taxon>
        <taxon>Craniata</taxon>
        <taxon>Vertebrata</taxon>
        <taxon>Euteleostomi</taxon>
        <taxon>Mammalia</taxon>
        <taxon>Eutheria</taxon>
        <taxon>Euarchontoglires</taxon>
        <taxon>Primates</taxon>
        <taxon>Haplorrhini</taxon>
        <taxon>Catarrhini</taxon>
        <taxon>Hominidae</taxon>
        <taxon>Homo</taxon>
    </lineage>
</organism>
<reference evidence="11 12" key="1">
    <citation type="journal article" date="1996" name="Mol. Cell. Biol.">
        <title>Characterization of NERF, a novel transcription factor related to the Ets factor ELF-1.</title>
        <authorList>
            <person name="Oettgen P."/>
            <person name="Akbarali Y."/>
            <person name="Boltax J."/>
            <person name="Best J."/>
            <person name="Kunsch C."/>
            <person name="Libermann T.A."/>
        </authorList>
    </citation>
    <scope>NUCLEOTIDE SEQUENCE [MRNA] (ISOFORMS 1; 2; 3 AND 5)</scope>
    <scope>FUNCTION</scope>
    <scope>TISSUE SPECIFICITY</scope>
    <source>
        <tissue evidence="7">Fetal brain</tissue>
        <tissue evidence="7">Fetal liver</tissue>
        <tissue evidence="12">Spleen</tissue>
    </source>
</reference>
<reference evidence="11 13" key="2">
    <citation type="submission" date="2000-04" db="EMBL/GenBank/DDBJ databases">
        <authorList>
            <person name="Wilkinson D.A."/>
            <person name="Neale G.A.M."/>
            <person name="Mao S."/>
            <person name="Fernandes E.R."/>
            <person name="Davenport J.W."/>
            <person name="Naeve C.W."/>
            <person name="Goorha R.M."/>
        </authorList>
    </citation>
    <scope>NUCLEOTIDE SEQUENCE [MRNA] (ISOFORMS 1 AND 2)</scope>
    <source>
        <tissue>Chronic myeloid leukemia cell</tissue>
    </source>
</reference>
<reference key="3">
    <citation type="journal article" date="2005" name="Nature">
        <title>Generation and annotation of the DNA sequences of human chromosomes 2 and 4.</title>
        <authorList>
            <person name="Hillier L.W."/>
            <person name="Graves T.A."/>
            <person name="Fulton R.S."/>
            <person name="Fulton L.A."/>
            <person name="Pepin K.H."/>
            <person name="Minx P."/>
            <person name="Wagner-McPherson C."/>
            <person name="Layman D."/>
            <person name="Wylie K."/>
            <person name="Sekhon M."/>
            <person name="Becker M.C."/>
            <person name="Fewell G.A."/>
            <person name="Delehaunty K.D."/>
            <person name="Miner T.L."/>
            <person name="Nash W.E."/>
            <person name="Kremitzki C."/>
            <person name="Oddy L."/>
            <person name="Du H."/>
            <person name="Sun H."/>
            <person name="Bradshaw-Cordum H."/>
            <person name="Ali J."/>
            <person name="Carter J."/>
            <person name="Cordes M."/>
            <person name="Harris A."/>
            <person name="Isak A."/>
            <person name="van Brunt A."/>
            <person name="Nguyen C."/>
            <person name="Du F."/>
            <person name="Courtney L."/>
            <person name="Kalicki J."/>
            <person name="Ozersky P."/>
            <person name="Abbott S."/>
            <person name="Armstrong J."/>
            <person name="Belter E.A."/>
            <person name="Caruso L."/>
            <person name="Cedroni M."/>
            <person name="Cotton M."/>
            <person name="Davidson T."/>
            <person name="Desai A."/>
            <person name="Elliott G."/>
            <person name="Erb T."/>
            <person name="Fronick C."/>
            <person name="Gaige T."/>
            <person name="Haakenson W."/>
            <person name="Haglund K."/>
            <person name="Holmes A."/>
            <person name="Harkins R."/>
            <person name="Kim K."/>
            <person name="Kruchowski S.S."/>
            <person name="Strong C.M."/>
            <person name="Grewal N."/>
            <person name="Goyea E."/>
            <person name="Hou S."/>
            <person name="Levy A."/>
            <person name="Martinka S."/>
            <person name="Mead K."/>
            <person name="McLellan M.D."/>
            <person name="Meyer R."/>
            <person name="Randall-Maher J."/>
            <person name="Tomlinson C."/>
            <person name="Dauphin-Kohlberg S."/>
            <person name="Kozlowicz-Reilly A."/>
            <person name="Shah N."/>
            <person name="Swearengen-Shahid S."/>
            <person name="Snider J."/>
            <person name="Strong J.T."/>
            <person name="Thompson J."/>
            <person name="Yoakum M."/>
            <person name="Leonard S."/>
            <person name="Pearman C."/>
            <person name="Trani L."/>
            <person name="Radionenko M."/>
            <person name="Waligorski J.E."/>
            <person name="Wang C."/>
            <person name="Rock S.M."/>
            <person name="Tin-Wollam A.-M."/>
            <person name="Maupin R."/>
            <person name="Latreille P."/>
            <person name="Wendl M.C."/>
            <person name="Yang S.-P."/>
            <person name="Pohl C."/>
            <person name="Wallis J.W."/>
            <person name="Spieth J."/>
            <person name="Bieri T.A."/>
            <person name="Berkowicz N."/>
            <person name="Nelson J.O."/>
            <person name="Osborne J."/>
            <person name="Ding L."/>
            <person name="Meyer R."/>
            <person name="Sabo A."/>
            <person name="Shotland Y."/>
            <person name="Sinha P."/>
            <person name="Wohldmann P.E."/>
            <person name="Cook L.L."/>
            <person name="Hickenbotham M.T."/>
            <person name="Eldred J."/>
            <person name="Williams D."/>
            <person name="Jones T.A."/>
            <person name="She X."/>
            <person name="Ciccarelli F.D."/>
            <person name="Izaurralde E."/>
            <person name="Taylor J."/>
            <person name="Schmutz J."/>
            <person name="Myers R.M."/>
            <person name="Cox D.R."/>
            <person name="Huang X."/>
            <person name="McPherson J.D."/>
            <person name="Mardis E.R."/>
            <person name="Clifton S.W."/>
            <person name="Warren W.C."/>
            <person name="Chinwalla A.T."/>
            <person name="Eddy S.R."/>
            <person name="Marra M.A."/>
            <person name="Ovcharenko I."/>
            <person name="Furey T.S."/>
            <person name="Miller W."/>
            <person name="Eichler E.E."/>
            <person name="Bork P."/>
            <person name="Suyama M."/>
            <person name="Torrents D."/>
            <person name="Waterston R.H."/>
            <person name="Wilson R.K."/>
        </authorList>
    </citation>
    <scope>NUCLEOTIDE SEQUENCE [LARGE SCALE GENOMIC DNA]</scope>
</reference>
<reference evidence="11 14" key="4">
    <citation type="journal article" date="2004" name="Genome Res.">
        <title>The status, quality, and expansion of the NIH full-length cDNA project: the Mammalian Gene Collection (MGC).</title>
        <authorList>
            <consortium name="The MGC Project Team"/>
        </authorList>
    </citation>
    <scope>NUCLEOTIDE SEQUENCE [LARGE SCALE MRNA] (ISOFORMS 3 AND 4)</scope>
    <source>
        <tissue evidence="14">Testis</tissue>
    </source>
</reference>
<reference evidence="11" key="5">
    <citation type="journal article" date="1999" name="Mol. Cell. Biol.">
        <title>Functional and physical interactions between AML1 proteins and an ETS protein, MEF: implications for the pathogenesis of t(8;21)-positive leukemias.</title>
        <authorList>
            <person name="Mao S."/>
            <person name="Frank R.C."/>
            <person name="Zhang J."/>
            <person name="Miyazaki Y."/>
            <person name="Nimer S.D."/>
        </authorList>
    </citation>
    <scope>INTERACTION WITH RUNX1</scope>
</reference>
<reference evidence="11" key="6">
    <citation type="journal article" date="2004" name="J. Biol. Chem.">
        <title>Isoforms of the Ets transcription factor NERF/ELF-2 physically interact with AML1 and mediate opposing effects on AML1-mediated transcription of the B cell-specific blk gene.</title>
        <authorList>
            <person name="Cho J.-Y."/>
            <person name="Akbarali Y."/>
            <person name="Zerbini L.F."/>
            <person name="Gu X."/>
            <person name="Boltax J."/>
            <person name="Wang Y."/>
            <person name="Oettgen P."/>
            <person name="Zhang D.-E."/>
            <person name="Libermann T.A."/>
        </authorList>
    </citation>
    <scope>FUNCTION</scope>
    <scope>INTERACTION WITH RUNX1</scope>
</reference>
<reference key="7">
    <citation type="journal article" date="2008" name="Proc. Natl. Acad. Sci. U.S.A.">
        <title>A quantitative atlas of mitotic phosphorylation.</title>
        <authorList>
            <person name="Dephoure N."/>
            <person name="Zhou C."/>
            <person name="Villen J."/>
            <person name="Beausoleil S.A."/>
            <person name="Bakalarski C.E."/>
            <person name="Elledge S.J."/>
            <person name="Gygi S.P."/>
        </authorList>
    </citation>
    <scope>PHOSPHORYLATION [LARGE SCALE ANALYSIS] AT SER-372</scope>
    <scope>IDENTIFICATION BY MASS SPECTROMETRY [LARGE SCALE ANALYSIS]</scope>
    <source>
        <tissue>Cervix carcinoma</tissue>
    </source>
</reference>
<reference key="8">
    <citation type="journal article" date="2009" name="Anal. Chem.">
        <title>Lys-N and trypsin cover complementary parts of the phosphoproteome in a refined SCX-based approach.</title>
        <authorList>
            <person name="Gauci S."/>
            <person name="Helbig A.O."/>
            <person name="Slijper M."/>
            <person name="Krijgsveld J."/>
            <person name="Heck A.J."/>
            <person name="Mohammed S."/>
        </authorList>
    </citation>
    <scope>IDENTIFICATION BY MASS SPECTROMETRY [LARGE SCALE ANALYSIS]</scope>
</reference>
<reference key="9">
    <citation type="journal article" date="2009" name="Sci. Signal.">
        <title>Quantitative phosphoproteomic analysis of T cell receptor signaling reveals system-wide modulation of protein-protein interactions.</title>
        <authorList>
            <person name="Mayya V."/>
            <person name="Lundgren D.H."/>
            <person name="Hwang S.-I."/>
            <person name="Rezaul K."/>
            <person name="Wu L."/>
            <person name="Eng J.K."/>
            <person name="Rodionov V."/>
            <person name="Han D.K."/>
        </authorList>
    </citation>
    <scope>PHOSPHORYLATION [LARGE SCALE ANALYSIS] AT SER-191</scope>
    <scope>IDENTIFICATION BY MASS SPECTROMETRY [LARGE SCALE ANALYSIS]</scope>
    <source>
        <tissue>Leukemic T-cell</tissue>
    </source>
</reference>
<reference key="10">
    <citation type="journal article" date="2010" name="Sci. Signal.">
        <title>Quantitative phosphoproteomics reveals widespread full phosphorylation site occupancy during mitosis.</title>
        <authorList>
            <person name="Olsen J.V."/>
            <person name="Vermeulen M."/>
            <person name="Santamaria A."/>
            <person name="Kumar C."/>
            <person name="Miller M.L."/>
            <person name="Jensen L.J."/>
            <person name="Gnad F."/>
            <person name="Cox J."/>
            <person name="Jensen T.S."/>
            <person name="Nigg E.A."/>
            <person name="Brunak S."/>
            <person name="Mann M."/>
        </authorList>
    </citation>
    <scope>PHOSPHORYLATION [LARGE SCALE ANALYSIS] AT SER-185 AND SER-430</scope>
    <scope>IDENTIFICATION BY MASS SPECTROMETRY [LARGE SCALE ANALYSIS]</scope>
    <source>
        <tissue>Cervix carcinoma</tissue>
    </source>
</reference>
<reference key="11">
    <citation type="journal article" date="2013" name="J. Proteome Res.">
        <title>Toward a comprehensive characterization of a human cancer cell phosphoproteome.</title>
        <authorList>
            <person name="Zhou H."/>
            <person name="Di Palma S."/>
            <person name="Preisinger C."/>
            <person name="Peng M."/>
            <person name="Polat A.N."/>
            <person name="Heck A.J."/>
            <person name="Mohammed S."/>
        </authorList>
    </citation>
    <scope>PHOSPHORYLATION [LARGE SCALE ANALYSIS] AT SER-107; SER-185; SER-191; SER-363 AND THR-521</scope>
    <scope>IDENTIFICATION BY MASS SPECTROMETRY [LARGE SCALE ANALYSIS]</scope>
    <source>
        <tissue>Cervix carcinoma</tissue>
        <tissue>Erythroleukemia</tissue>
    </source>
</reference>
<reference key="12">
    <citation type="journal article" date="2014" name="J. Proteomics">
        <title>An enzyme assisted RP-RPLC approach for in-depth analysis of human liver phosphoproteome.</title>
        <authorList>
            <person name="Bian Y."/>
            <person name="Song C."/>
            <person name="Cheng K."/>
            <person name="Dong M."/>
            <person name="Wang F."/>
            <person name="Huang J."/>
            <person name="Sun D."/>
            <person name="Wang L."/>
            <person name="Ye M."/>
            <person name="Zou H."/>
        </authorList>
    </citation>
    <scope>IDENTIFICATION BY MASS SPECTROMETRY [LARGE SCALE ANALYSIS]</scope>
    <source>
        <tissue>Liver</tissue>
    </source>
</reference>
<reference key="13">
    <citation type="journal article" date="2014" name="Mol. Cell. Proteomics">
        <title>Immunoaffinity enrichment and mass spectrometry analysis of protein methylation.</title>
        <authorList>
            <person name="Guo A."/>
            <person name="Gu H."/>
            <person name="Zhou J."/>
            <person name="Mulhern D."/>
            <person name="Wang Y."/>
            <person name="Lee K.A."/>
            <person name="Yang V."/>
            <person name="Aguiar M."/>
            <person name="Kornhauser J."/>
            <person name="Jia X."/>
            <person name="Ren J."/>
            <person name="Beausoleil S.A."/>
            <person name="Silva J.C."/>
            <person name="Vemulapalli V."/>
            <person name="Bedford M.T."/>
            <person name="Comb M.J."/>
        </authorList>
    </citation>
    <scope>METHYLATION [LARGE SCALE ANALYSIS] AT ARG-494</scope>
    <scope>IDENTIFICATION BY MASS SPECTROMETRY [LARGE SCALE ANALYSIS]</scope>
    <source>
        <tissue>Colon carcinoma</tissue>
    </source>
</reference>
<reference key="14">
    <citation type="journal article" date="2014" name="Nat. Struct. Mol. Biol.">
        <title>Uncovering global SUMOylation signaling networks in a site-specific manner.</title>
        <authorList>
            <person name="Hendriks I.A."/>
            <person name="D'Souza R.C."/>
            <person name="Yang B."/>
            <person name="Verlaan-de Vries M."/>
            <person name="Mann M."/>
            <person name="Vertegaal A.C."/>
        </authorList>
    </citation>
    <scope>SUMOYLATION [LARGE SCALE ANALYSIS] AT LYS-536</scope>
    <scope>IDENTIFICATION BY MASS SPECTROMETRY [LARGE SCALE ANALYSIS]</scope>
</reference>
<protein>
    <recommendedName>
        <fullName>ETS-related transcription factor Elf-2</fullName>
    </recommendedName>
    <alternativeName>
        <fullName>E74-like factor 2</fullName>
    </alternativeName>
    <alternativeName>
        <fullName>New ETS-related factor</fullName>
    </alternativeName>
</protein>
<sequence length="593" mass="63967">MTSAVVDSGGTILELSSNGVENQEESEKVSEYPAVIVEPVPSARLEQGYAAQVLVYDDETYMMQDVAEEQEVETENVETVEASVHSSNAHCTDKTIEAAEALLHMESPTCLRDSRSPVEVFVPPCVSTPEFIHAAMRPDVITETVVEVSTEESEPMDTSPIPTSPDSHEPMKKKKVGRKPKTQQSPISNGSPELGIKKKPREGKGNTTYLWEFLLDLLQDKNTCPRYIKWTQREKGIFKLVDSKAVSKLWGKHKNKPDMNYETMGRALRYYYQRGILAKVEGQRLVYQFKDMPKNIVVIDDDKSETCNEDLAGTTDEKSLERVSLSAESLLKAASSVRSGKNSSPINCSRAEKGVARVVNITSPGHDASSRSPTTTASVSATAAPRTVRVAMQVPVVMTSLGQKISTVAVQSVNAGAPLITSTSPTTATSPKVVIQTIPTVMPASTENGDKITMQPAKIITIPATQLAQCQLQTKSNLTGSGSINIVGTPLAVRALTPVSIAHGTPVMRLSMPTQQASGQTPPRVISAVIKGPEVKSEAVAKKQEHDVKTLQLVEEKPADGNKTVTHVVVVSAPSAIALPVTMKTEGLVTCEK</sequence>
<proteinExistence type="evidence at protein level"/>
<comment type="function">
    <text>Isoform 1 transcriptionally activates the LYN and BLK promoters and acts synergistically with RUNX1 to transactivate the BLK promoter.</text>
</comment>
<comment type="function">
    <text>Isoform 2 may function in repression of RUNX1-mediated transactivation.</text>
</comment>
<comment type="subunit">
    <text evidence="1 5 6">Interacts with the LIM domains of LMO2 (By similarity). Interacts via its N-terminal region with RUNX1.</text>
</comment>
<comment type="interaction">
    <interactant intactId="EBI-956941">
        <id>Q15723</id>
    </interactant>
    <interactant intactId="EBI-925904">
        <id>Q01196</id>
        <label>RUNX1</label>
    </interactant>
    <organismsDiffer>false</organismsDiffer>
    <experiments>2</experiments>
</comment>
<comment type="subcellular location">
    <subcellularLocation>
        <location>Nucleus</location>
    </subcellularLocation>
</comment>
<comment type="alternative products">
    <event type="alternative splicing"/>
    <isoform>
        <id>Q15723-5</id>
        <name evidence="7">5</name>
        <name evidence="9">NERF-2b</name>
        <sequence type="displayed"/>
    </isoform>
    <isoform>
        <id>Q15723-1</id>
        <name evidence="7">1</name>
        <name evidence="9">NERF-2</name>
        <name evidence="9">NERF-2a</name>
        <sequence type="described" ref="VSP_014155"/>
    </isoform>
    <isoform>
        <id>Q15723-2</id>
        <name evidence="7">2</name>
        <name evidence="9">NERF-1a</name>
        <sequence type="described" ref="VSP_014154 VSP_014155"/>
    </isoform>
    <isoform>
        <id>Q15723-3</id>
        <name evidence="7">3</name>
        <name evidence="9">NERF-1b</name>
        <sequence type="described" ref="VSP_014154"/>
    </isoform>
    <isoform>
        <id>Q15723-4</id>
        <name evidence="11">4</name>
        <sequence type="described" ref="VSP_014154 VSP_014156"/>
    </isoform>
</comment>
<comment type="tissue specificity">
    <text evidence="7">Expressed in all fetal and adult tissues examined. Among fetal tissues, highest levels of expression detected in heart, lung, liver and kidney, and lower levels in brain. Among adult tissues, highest levels of expression detected in heart, placenta, lung, skeletal muscle, spleen, thymus, testis and ovary. Moderate expression in prostate, small intestine, kidney, liver and pancreas, and weak expression in colon, brain and peripheral blood lymphocytes.</text>
</comment>
<comment type="similarity">
    <text evidence="2">Belongs to the ETS family.</text>
</comment>
<comment type="sequence caution" evidence="11">
    <conflict type="frameshift">
        <sequence resource="EMBL-CDS" id="AAH65025"/>
    </conflict>
</comment>
<keyword id="KW-0010">Activator</keyword>
<keyword id="KW-0025">Alternative splicing</keyword>
<keyword id="KW-0238">DNA-binding</keyword>
<keyword id="KW-1017">Isopeptide bond</keyword>
<keyword id="KW-0488">Methylation</keyword>
<keyword id="KW-0539">Nucleus</keyword>
<keyword id="KW-0597">Phosphoprotein</keyword>
<keyword id="KW-1267">Proteomics identification</keyword>
<keyword id="KW-1185">Reference proteome</keyword>
<keyword id="KW-0804">Transcription</keyword>
<keyword id="KW-0805">Transcription regulation</keyword>
<keyword id="KW-0832">Ubl conjugation</keyword>